<comment type="catalytic activity">
    <reaction>
        <text>tRNA(His) + L-histidine + ATP = L-histidyl-tRNA(His) + AMP + diphosphate + H(+)</text>
        <dbReference type="Rhea" id="RHEA:17313"/>
        <dbReference type="Rhea" id="RHEA-COMP:9665"/>
        <dbReference type="Rhea" id="RHEA-COMP:9689"/>
        <dbReference type="ChEBI" id="CHEBI:15378"/>
        <dbReference type="ChEBI" id="CHEBI:30616"/>
        <dbReference type="ChEBI" id="CHEBI:33019"/>
        <dbReference type="ChEBI" id="CHEBI:57595"/>
        <dbReference type="ChEBI" id="CHEBI:78442"/>
        <dbReference type="ChEBI" id="CHEBI:78527"/>
        <dbReference type="ChEBI" id="CHEBI:456215"/>
        <dbReference type="EC" id="6.1.1.21"/>
    </reaction>
</comment>
<comment type="subunit">
    <text evidence="1">Homodimer.</text>
</comment>
<comment type="subcellular location">
    <subcellularLocation>
        <location evidence="1">Cytoplasm</location>
    </subcellularLocation>
</comment>
<comment type="similarity">
    <text evidence="2">Belongs to the class-II aminoacyl-tRNA synthetase family.</text>
</comment>
<gene>
    <name type="primary">hisS</name>
    <name type="ordered locus">jhp_1115</name>
</gene>
<protein>
    <recommendedName>
        <fullName>Histidine--tRNA ligase</fullName>
        <ecNumber>6.1.1.21</ecNumber>
    </recommendedName>
    <alternativeName>
        <fullName>Histidyl-tRNA synthetase</fullName>
        <shortName>HisRS</shortName>
    </alternativeName>
</protein>
<reference key="1">
    <citation type="journal article" date="1999" name="Nature">
        <title>Genomic sequence comparison of two unrelated isolates of the human gastric pathogen Helicobacter pylori.</title>
        <authorList>
            <person name="Alm R.A."/>
            <person name="Ling L.-S.L."/>
            <person name="Moir D.T."/>
            <person name="King B.L."/>
            <person name="Brown E.D."/>
            <person name="Doig P.C."/>
            <person name="Smith D.R."/>
            <person name="Noonan B."/>
            <person name="Guild B.C."/>
            <person name="deJonge B.L."/>
            <person name="Carmel G."/>
            <person name="Tummino P.J."/>
            <person name="Caruso A."/>
            <person name="Uria-Nickelsen M."/>
            <person name="Mills D.M."/>
            <person name="Ives C."/>
            <person name="Gibson R."/>
            <person name="Merberg D."/>
            <person name="Mills S.D."/>
            <person name="Jiang Q."/>
            <person name="Taylor D.E."/>
            <person name="Vovis G.F."/>
            <person name="Trust T.J."/>
        </authorList>
    </citation>
    <scope>NUCLEOTIDE SEQUENCE [LARGE SCALE GENOMIC DNA]</scope>
    <source>
        <strain>J99 / ATCC 700824</strain>
    </source>
</reference>
<sequence>MITPKVLSGFKDRLPKDAIQKAQLLAKVSVVFQSFGFVPIETPHLEYAQTLLPDASSDIQKEIYRFKDHGDRDVALRFDLTVPLARFVSLHHQILGMPFKRYAIGNVFRGERAQKGRYREFTQCDFDFIGSESLVCDAEIIQVIIASLKALDLEDFCVSINHRKILNGICEYFGIAQVNEVLRIVDKLEKIGLNGVEEELKKECDLDSNTIKDLLEMVQIKQNDLSHAEFFEKIAYLKDYNENLKKGIQDLERLYQLLGDLQISQNLYKIDFSIARGLGYYTGIVYETTLNDMKSLGSVCSGGRYDHLTKNFSKENLQGVGASIGIDRLIVALSEMQLLDERSTQAKVLIACMHEEYFSYANRLAESLRQSGIFSEVYPEAQKIKKPFSYANHKGHEFVAVIGEEEFKSETLSLKNMHSGMQLNCLSFLKALEIIGENDEDL</sequence>
<dbReference type="EC" id="6.1.1.21"/>
<dbReference type="EMBL" id="AE001439">
    <property type="protein sequence ID" value="AAD06696.1"/>
    <property type="molecule type" value="Genomic_DNA"/>
</dbReference>
<dbReference type="PIR" id="D71847">
    <property type="entry name" value="D71847"/>
</dbReference>
<dbReference type="RefSeq" id="WP_000632487.1">
    <property type="nucleotide sequence ID" value="NC_000921.1"/>
</dbReference>
<dbReference type="SMR" id="Q9ZK27"/>
<dbReference type="KEGG" id="hpj:jhp_1115"/>
<dbReference type="PATRIC" id="fig|85963.30.peg.1463"/>
<dbReference type="eggNOG" id="COG0124">
    <property type="taxonomic scope" value="Bacteria"/>
</dbReference>
<dbReference type="Proteomes" id="UP000000804">
    <property type="component" value="Chromosome"/>
</dbReference>
<dbReference type="GO" id="GO:0005737">
    <property type="term" value="C:cytoplasm"/>
    <property type="evidence" value="ECO:0007669"/>
    <property type="project" value="UniProtKB-SubCell"/>
</dbReference>
<dbReference type="GO" id="GO:0005524">
    <property type="term" value="F:ATP binding"/>
    <property type="evidence" value="ECO:0007669"/>
    <property type="project" value="UniProtKB-UniRule"/>
</dbReference>
<dbReference type="GO" id="GO:0004821">
    <property type="term" value="F:histidine-tRNA ligase activity"/>
    <property type="evidence" value="ECO:0007669"/>
    <property type="project" value="UniProtKB-UniRule"/>
</dbReference>
<dbReference type="GO" id="GO:0006427">
    <property type="term" value="P:histidyl-tRNA aminoacylation"/>
    <property type="evidence" value="ECO:0007669"/>
    <property type="project" value="UniProtKB-UniRule"/>
</dbReference>
<dbReference type="CDD" id="cd00773">
    <property type="entry name" value="HisRS-like_core"/>
    <property type="match status" value="1"/>
</dbReference>
<dbReference type="CDD" id="cd00859">
    <property type="entry name" value="HisRS_anticodon"/>
    <property type="match status" value="1"/>
</dbReference>
<dbReference type="FunFam" id="3.30.930.10:FF:000152">
    <property type="entry name" value="Histidine--tRNA ligase"/>
    <property type="match status" value="1"/>
</dbReference>
<dbReference type="Gene3D" id="3.40.50.800">
    <property type="entry name" value="Anticodon-binding domain"/>
    <property type="match status" value="1"/>
</dbReference>
<dbReference type="Gene3D" id="3.30.930.10">
    <property type="entry name" value="Bira Bifunctional Protein, Domain 2"/>
    <property type="match status" value="1"/>
</dbReference>
<dbReference type="HAMAP" id="MF_00127">
    <property type="entry name" value="His_tRNA_synth"/>
    <property type="match status" value="1"/>
</dbReference>
<dbReference type="InterPro" id="IPR006195">
    <property type="entry name" value="aa-tRNA-synth_II"/>
</dbReference>
<dbReference type="InterPro" id="IPR045864">
    <property type="entry name" value="aa-tRNA-synth_II/BPL/LPL"/>
</dbReference>
<dbReference type="InterPro" id="IPR004154">
    <property type="entry name" value="Anticodon-bd"/>
</dbReference>
<dbReference type="InterPro" id="IPR036621">
    <property type="entry name" value="Anticodon-bd_dom_sf"/>
</dbReference>
<dbReference type="InterPro" id="IPR015807">
    <property type="entry name" value="His-tRNA-ligase"/>
</dbReference>
<dbReference type="InterPro" id="IPR041715">
    <property type="entry name" value="HisRS-like_core"/>
</dbReference>
<dbReference type="InterPro" id="IPR004516">
    <property type="entry name" value="HisRS/HisZ"/>
</dbReference>
<dbReference type="InterPro" id="IPR033656">
    <property type="entry name" value="HisRS_anticodon"/>
</dbReference>
<dbReference type="NCBIfam" id="TIGR00442">
    <property type="entry name" value="hisS"/>
    <property type="match status" value="1"/>
</dbReference>
<dbReference type="PANTHER" id="PTHR11476:SF7">
    <property type="entry name" value="HISTIDINE--TRNA LIGASE"/>
    <property type="match status" value="1"/>
</dbReference>
<dbReference type="PANTHER" id="PTHR11476">
    <property type="entry name" value="HISTIDYL-TRNA SYNTHETASE"/>
    <property type="match status" value="1"/>
</dbReference>
<dbReference type="Pfam" id="PF03129">
    <property type="entry name" value="HGTP_anticodon"/>
    <property type="match status" value="1"/>
</dbReference>
<dbReference type="Pfam" id="PF13393">
    <property type="entry name" value="tRNA-synt_His"/>
    <property type="match status" value="1"/>
</dbReference>
<dbReference type="PIRSF" id="PIRSF001549">
    <property type="entry name" value="His-tRNA_synth"/>
    <property type="match status" value="1"/>
</dbReference>
<dbReference type="SUPFAM" id="SSF52954">
    <property type="entry name" value="Class II aaRS ABD-related"/>
    <property type="match status" value="1"/>
</dbReference>
<dbReference type="SUPFAM" id="SSF55681">
    <property type="entry name" value="Class II aaRS and biotin synthetases"/>
    <property type="match status" value="1"/>
</dbReference>
<dbReference type="PROSITE" id="PS50862">
    <property type="entry name" value="AA_TRNA_LIGASE_II"/>
    <property type="match status" value="1"/>
</dbReference>
<feature type="chain" id="PRO_0000136175" description="Histidine--tRNA ligase">
    <location>
        <begin position="1"/>
        <end position="442"/>
    </location>
</feature>
<accession>Q9ZK27</accession>
<organism>
    <name type="scientific">Helicobacter pylori (strain J99 / ATCC 700824)</name>
    <name type="common">Campylobacter pylori J99</name>
    <dbReference type="NCBI Taxonomy" id="85963"/>
    <lineage>
        <taxon>Bacteria</taxon>
        <taxon>Pseudomonadati</taxon>
        <taxon>Campylobacterota</taxon>
        <taxon>Epsilonproteobacteria</taxon>
        <taxon>Campylobacterales</taxon>
        <taxon>Helicobacteraceae</taxon>
        <taxon>Helicobacter</taxon>
    </lineage>
</organism>
<evidence type="ECO:0000250" key="1"/>
<evidence type="ECO:0000305" key="2"/>
<keyword id="KW-0030">Aminoacyl-tRNA synthetase</keyword>
<keyword id="KW-0067">ATP-binding</keyword>
<keyword id="KW-0963">Cytoplasm</keyword>
<keyword id="KW-0436">Ligase</keyword>
<keyword id="KW-0547">Nucleotide-binding</keyword>
<keyword id="KW-0648">Protein biosynthesis</keyword>
<proteinExistence type="inferred from homology"/>
<name>SYH_HELPJ</name>